<sequence>MGLFGGGNSKSTSNQTTNNENTNIATQGDNLGAVINGNGNSVTMTDHGLVDALVDIGGYMSDSTQAAFGAASDMAYSSTEFAGQAITDGFDYAEGVNRDSLDMAEGINRDSLNFGRDALSVTGDLMTDAMQYSSDAMLASIEGNAGLAGQVMDASTTMTGQSLNFGLDTFSGAMDSLNQSNNNMALLAEFTSNQSTDLARDSMAFGADLMAQYQDNISASNYDAREHMLDASKTAMQFADNMSRSDGQQLAKDSNKTLMIGIVAVSAAVGLYAISKGVN</sequence>
<feature type="chain" id="PRO_0000339916" description="Uncharacterized protein Gp-j">
    <location>
        <begin position="1"/>
        <end position="279"/>
    </location>
</feature>
<feature type="transmembrane region" description="Helical" evidence="1">
    <location>
        <begin position="256"/>
        <end position="273"/>
    </location>
</feature>
<feature type="region of interest" description="Disordered" evidence="2">
    <location>
        <begin position="1"/>
        <end position="28"/>
    </location>
</feature>
<feature type="compositionally biased region" description="Low complexity" evidence="2">
    <location>
        <begin position="9"/>
        <end position="23"/>
    </location>
</feature>
<name>GPJ_BPPM2</name>
<dbReference type="EMBL" id="AF155037">
    <property type="protein sequence ID" value="AAD43553.1"/>
    <property type="molecule type" value="Genomic_DNA"/>
</dbReference>
<dbReference type="RefSeq" id="NP_049907.1">
    <property type="nucleotide sequence ID" value="NC_000867.1"/>
</dbReference>
<dbReference type="SMR" id="Q9XJR4"/>
<dbReference type="KEGG" id="vg:1262025"/>
<dbReference type="Proteomes" id="UP000002136">
    <property type="component" value="Genome"/>
</dbReference>
<dbReference type="GO" id="GO:0033644">
    <property type="term" value="C:host cell membrane"/>
    <property type="evidence" value="ECO:0007669"/>
    <property type="project" value="UniProtKB-SubCell"/>
</dbReference>
<dbReference type="GO" id="GO:0016020">
    <property type="term" value="C:membrane"/>
    <property type="evidence" value="ECO:0007669"/>
    <property type="project" value="UniProtKB-KW"/>
</dbReference>
<comment type="subcellular location">
    <subcellularLocation>
        <location evidence="3">Host membrane</location>
        <topology evidence="3">Single-pass membrane protein</topology>
    </subcellularLocation>
</comment>
<organismHost>
    <name type="scientific">Pseudoalteromonas espejiana</name>
    <dbReference type="NCBI Taxonomy" id="28107"/>
</organismHost>
<organism>
    <name type="scientific">Pseudoalteromonas phage PM2</name>
    <name type="common">Bacteriophage PM2</name>
    <dbReference type="NCBI Taxonomy" id="2905728"/>
    <lineage>
        <taxon>Viruses</taxon>
        <taxon>Varidnaviria</taxon>
        <taxon>Bamfordvirae</taxon>
        <taxon>Preplasmiviricota</taxon>
        <taxon>Tectiliviricetes</taxon>
        <taxon>Vinavirales</taxon>
        <taxon>Corticoviridae</taxon>
        <taxon>Corticovirus</taxon>
        <taxon>Corticovirus PM2</taxon>
    </lineage>
</organism>
<accession>Q9XJR4</accession>
<gene>
    <name type="ORF">j</name>
</gene>
<evidence type="ECO:0000255" key="1"/>
<evidence type="ECO:0000256" key="2">
    <source>
        <dbReference type="SAM" id="MobiDB-lite"/>
    </source>
</evidence>
<evidence type="ECO:0000305" key="3"/>
<protein>
    <recommendedName>
        <fullName>Uncharacterized protein Gp-j</fullName>
    </recommendedName>
</protein>
<reference key="1">
    <citation type="journal article" date="1999" name="Virology">
        <title>The complete genome sequence of PM2, the first lipid-containing bacterial virus to be isolated.</title>
        <authorList>
            <person name="Maennistoe R.H."/>
            <person name="Kivelae H.M."/>
            <person name="Paulin L."/>
            <person name="Bamford D.H."/>
            <person name="Bamford J.K."/>
        </authorList>
    </citation>
    <scope>NUCLEOTIDE SEQUENCE [GENOMIC DNA]</scope>
</reference>
<keyword id="KW-1043">Host membrane</keyword>
<keyword id="KW-0472">Membrane</keyword>
<keyword id="KW-1185">Reference proteome</keyword>
<keyword id="KW-0812">Transmembrane</keyword>
<keyword id="KW-1133">Transmembrane helix</keyword>
<proteinExistence type="predicted"/>